<gene>
    <name evidence="1" type="primary">rplF</name>
    <name type="ordered locus">A1I_02110</name>
</gene>
<feature type="chain" id="PRO_1000144039" description="Large ribosomal subunit protein uL6">
    <location>
        <begin position="1"/>
        <end position="177"/>
    </location>
</feature>
<name>RL6_RICB8</name>
<proteinExistence type="inferred from homology"/>
<organism>
    <name type="scientific">Rickettsia bellii (strain OSU 85-389)</name>
    <dbReference type="NCBI Taxonomy" id="391896"/>
    <lineage>
        <taxon>Bacteria</taxon>
        <taxon>Pseudomonadati</taxon>
        <taxon>Pseudomonadota</taxon>
        <taxon>Alphaproteobacteria</taxon>
        <taxon>Rickettsiales</taxon>
        <taxon>Rickettsiaceae</taxon>
        <taxon>Rickettsieae</taxon>
        <taxon>Rickettsia</taxon>
        <taxon>belli group</taxon>
    </lineage>
</organism>
<comment type="function">
    <text evidence="1">This protein binds to the 23S rRNA, and is important in its secondary structure. It is located near the subunit interface in the base of the L7/L12 stalk, and near the tRNA binding site of the peptidyltransferase center.</text>
</comment>
<comment type="subunit">
    <text evidence="1">Part of the 50S ribosomal subunit.</text>
</comment>
<comment type="similarity">
    <text evidence="1">Belongs to the universal ribosomal protein uL6 family.</text>
</comment>
<accession>A8GVC9</accession>
<protein>
    <recommendedName>
        <fullName evidence="1">Large ribosomal subunit protein uL6</fullName>
    </recommendedName>
    <alternativeName>
        <fullName evidence="2">50S ribosomal protein L6</fullName>
    </alternativeName>
</protein>
<keyword id="KW-0687">Ribonucleoprotein</keyword>
<keyword id="KW-0689">Ribosomal protein</keyword>
<keyword id="KW-0694">RNA-binding</keyword>
<keyword id="KW-0699">rRNA-binding</keyword>
<evidence type="ECO:0000255" key="1">
    <source>
        <dbReference type="HAMAP-Rule" id="MF_01365"/>
    </source>
</evidence>
<evidence type="ECO:0000305" key="2"/>
<dbReference type="EMBL" id="CP000849">
    <property type="protein sequence ID" value="ABV78806.1"/>
    <property type="molecule type" value="Genomic_DNA"/>
</dbReference>
<dbReference type="RefSeq" id="WP_011477706.1">
    <property type="nucleotide sequence ID" value="NC_009883.1"/>
</dbReference>
<dbReference type="SMR" id="A8GVC9"/>
<dbReference type="KEGG" id="rbo:A1I_02110"/>
<dbReference type="HOGENOM" id="CLU_065464_1_2_5"/>
<dbReference type="GO" id="GO:1990904">
    <property type="term" value="C:ribonucleoprotein complex"/>
    <property type="evidence" value="ECO:0007669"/>
    <property type="project" value="UniProtKB-KW"/>
</dbReference>
<dbReference type="GO" id="GO:0005840">
    <property type="term" value="C:ribosome"/>
    <property type="evidence" value="ECO:0007669"/>
    <property type="project" value="UniProtKB-KW"/>
</dbReference>
<dbReference type="GO" id="GO:0019843">
    <property type="term" value="F:rRNA binding"/>
    <property type="evidence" value="ECO:0007669"/>
    <property type="project" value="UniProtKB-UniRule"/>
</dbReference>
<dbReference type="GO" id="GO:0003735">
    <property type="term" value="F:structural constituent of ribosome"/>
    <property type="evidence" value="ECO:0007669"/>
    <property type="project" value="InterPro"/>
</dbReference>
<dbReference type="GO" id="GO:0002181">
    <property type="term" value="P:cytoplasmic translation"/>
    <property type="evidence" value="ECO:0007669"/>
    <property type="project" value="TreeGrafter"/>
</dbReference>
<dbReference type="Gene3D" id="3.90.930.12">
    <property type="entry name" value="Ribosomal protein L6, alpha-beta domain"/>
    <property type="match status" value="2"/>
</dbReference>
<dbReference type="HAMAP" id="MF_01365_B">
    <property type="entry name" value="Ribosomal_uL6_B"/>
    <property type="match status" value="1"/>
</dbReference>
<dbReference type="InterPro" id="IPR000702">
    <property type="entry name" value="Ribosomal_uL6-like"/>
</dbReference>
<dbReference type="InterPro" id="IPR036789">
    <property type="entry name" value="Ribosomal_uL6-like_a/b-dom_sf"/>
</dbReference>
<dbReference type="InterPro" id="IPR020040">
    <property type="entry name" value="Ribosomal_uL6_a/b-dom"/>
</dbReference>
<dbReference type="InterPro" id="IPR019906">
    <property type="entry name" value="Ribosomal_uL6_bac-type"/>
</dbReference>
<dbReference type="InterPro" id="IPR002358">
    <property type="entry name" value="Ribosomal_uL6_CS"/>
</dbReference>
<dbReference type="NCBIfam" id="TIGR03654">
    <property type="entry name" value="L6_bact"/>
    <property type="match status" value="1"/>
</dbReference>
<dbReference type="PANTHER" id="PTHR11655">
    <property type="entry name" value="60S/50S RIBOSOMAL PROTEIN L6/L9"/>
    <property type="match status" value="1"/>
</dbReference>
<dbReference type="PANTHER" id="PTHR11655:SF14">
    <property type="entry name" value="LARGE RIBOSOMAL SUBUNIT PROTEIN UL6M"/>
    <property type="match status" value="1"/>
</dbReference>
<dbReference type="Pfam" id="PF00347">
    <property type="entry name" value="Ribosomal_L6"/>
    <property type="match status" value="2"/>
</dbReference>
<dbReference type="PIRSF" id="PIRSF002162">
    <property type="entry name" value="Ribosomal_L6"/>
    <property type="match status" value="1"/>
</dbReference>
<dbReference type="PRINTS" id="PR00059">
    <property type="entry name" value="RIBOSOMALL6"/>
</dbReference>
<dbReference type="SUPFAM" id="SSF56053">
    <property type="entry name" value="Ribosomal protein L6"/>
    <property type="match status" value="2"/>
</dbReference>
<dbReference type="PROSITE" id="PS00525">
    <property type="entry name" value="RIBOSOMAL_L6_1"/>
    <property type="match status" value="1"/>
</dbReference>
<reference key="1">
    <citation type="submission" date="2007-09" db="EMBL/GenBank/DDBJ databases">
        <title>Complete genome sequencing of Rickettsia bellii.</title>
        <authorList>
            <person name="Madan A."/>
            <person name="Lee H."/>
            <person name="Madan A."/>
            <person name="Yoon J.-G."/>
            <person name="Ryu G.-Y."/>
            <person name="Dasch G."/>
            <person name="Ereemeva M."/>
        </authorList>
    </citation>
    <scope>NUCLEOTIDE SEQUENCE [LARGE SCALE GENOMIC DNA]</scope>
    <source>
        <strain>OSU 85-389</strain>
    </source>
</reference>
<sequence>MSCVGKLPIIIPEGVKVGLNDLEVKISGPKGELSKSFKGSIGISLAENKLLVKPLSSSKSARAMWGTARSIISNMVTGVKEGFKLKLEINGVGYRAMMKGKYLNLMLAKSHNTKIEIPSHIKVEVPKQNIIILEGTDKEKLGQFASIIIKQRPPEPYKGKGIKFEDQFIPCKEGKKN</sequence>